<keyword id="KW-1003">Cell membrane</keyword>
<keyword id="KW-0472">Membrane</keyword>
<keyword id="KW-1185">Reference proteome</keyword>
<keyword id="KW-0812">Transmembrane</keyword>
<keyword id="KW-1133">Transmembrane helix</keyword>
<sequence length="57" mass="5893">MLSWAVTFLVVALIAAVLGFGGIAGTAIEIAKIIFFVAIVLFVISAVAGLMRRGRAS</sequence>
<dbReference type="EMBL" id="CP000781">
    <property type="protein sequence ID" value="ABS66970.1"/>
    <property type="molecule type" value="Genomic_DNA"/>
</dbReference>
<dbReference type="STRING" id="78245.Xaut_1725"/>
<dbReference type="KEGG" id="xau:Xaut_1725"/>
<dbReference type="eggNOG" id="COG5487">
    <property type="taxonomic scope" value="Bacteria"/>
</dbReference>
<dbReference type="HOGENOM" id="CLU_187346_1_0_5"/>
<dbReference type="Proteomes" id="UP000002417">
    <property type="component" value="Chromosome"/>
</dbReference>
<dbReference type="GO" id="GO:0005886">
    <property type="term" value="C:plasma membrane"/>
    <property type="evidence" value="ECO:0007669"/>
    <property type="project" value="UniProtKB-SubCell"/>
</dbReference>
<dbReference type="HAMAP" id="MF_01361">
    <property type="entry name" value="UPF0391"/>
    <property type="match status" value="1"/>
</dbReference>
<dbReference type="InterPro" id="IPR009760">
    <property type="entry name" value="DUF1328"/>
</dbReference>
<dbReference type="NCBIfam" id="NF010226">
    <property type="entry name" value="PRK13682.1-1"/>
    <property type="match status" value="1"/>
</dbReference>
<dbReference type="NCBIfam" id="NF010228">
    <property type="entry name" value="PRK13682.1-3"/>
    <property type="match status" value="1"/>
</dbReference>
<dbReference type="NCBIfam" id="NF010229">
    <property type="entry name" value="PRK13682.1-4"/>
    <property type="match status" value="1"/>
</dbReference>
<dbReference type="Pfam" id="PF07043">
    <property type="entry name" value="DUF1328"/>
    <property type="match status" value="1"/>
</dbReference>
<dbReference type="PIRSF" id="PIRSF036466">
    <property type="entry name" value="UCP036466"/>
    <property type="match status" value="1"/>
</dbReference>
<organism>
    <name type="scientific">Xanthobacter autotrophicus (strain ATCC BAA-1158 / Py2)</name>
    <dbReference type="NCBI Taxonomy" id="78245"/>
    <lineage>
        <taxon>Bacteria</taxon>
        <taxon>Pseudomonadati</taxon>
        <taxon>Pseudomonadota</taxon>
        <taxon>Alphaproteobacteria</taxon>
        <taxon>Hyphomicrobiales</taxon>
        <taxon>Xanthobacteraceae</taxon>
        <taxon>Xanthobacter</taxon>
    </lineage>
</organism>
<comment type="subcellular location">
    <subcellularLocation>
        <location evidence="1">Cell membrane</location>
        <topology evidence="1">Multi-pass membrane protein</topology>
    </subcellularLocation>
</comment>
<comment type="similarity">
    <text evidence="1">Belongs to the UPF0391 family.</text>
</comment>
<name>Y1725_XANP2</name>
<evidence type="ECO:0000255" key="1">
    <source>
        <dbReference type="HAMAP-Rule" id="MF_01361"/>
    </source>
</evidence>
<protein>
    <recommendedName>
        <fullName evidence="1">UPF0391 membrane protein Xaut_1725</fullName>
    </recommendedName>
</protein>
<gene>
    <name type="ordered locus">Xaut_1725</name>
</gene>
<proteinExistence type="inferred from homology"/>
<feature type="chain" id="PRO_1000143727" description="UPF0391 membrane protein Xaut_1725">
    <location>
        <begin position="1"/>
        <end position="57"/>
    </location>
</feature>
<feature type="transmembrane region" description="Helical" evidence="1">
    <location>
        <begin position="4"/>
        <end position="24"/>
    </location>
</feature>
<feature type="transmembrane region" description="Helical" evidence="1">
    <location>
        <begin position="30"/>
        <end position="50"/>
    </location>
</feature>
<accession>A7IG27</accession>
<reference key="1">
    <citation type="submission" date="2007-07" db="EMBL/GenBank/DDBJ databases">
        <title>Complete sequence of chromosome of Xanthobacter autotrophicus Py2.</title>
        <authorList>
            <consortium name="US DOE Joint Genome Institute"/>
            <person name="Copeland A."/>
            <person name="Lucas S."/>
            <person name="Lapidus A."/>
            <person name="Barry K."/>
            <person name="Glavina del Rio T."/>
            <person name="Hammon N."/>
            <person name="Israni S."/>
            <person name="Dalin E."/>
            <person name="Tice H."/>
            <person name="Pitluck S."/>
            <person name="Sims D."/>
            <person name="Brettin T."/>
            <person name="Bruce D."/>
            <person name="Detter J.C."/>
            <person name="Han C."/>
            <person name="Tapia R."/>
            <person name="Brainard J."/>
            <person name="Schmutz J."/>
            <person name="Larimer F."/>
            <person name="Land M."/>
            <person name="Hauser L."/>
            <person name="Kyrpides N."/>
            <person name="Kim E."/>
            <person name="Ensigns S.A."/>
            <person name="Richardson P."/>
        </authorList>
    </citation>
    <scope>NUCLEOTIDE SEQUENCE [LARGE SCALE GENOMIC DNA]</scope>
    <source>
        <strain>ATCC BAA-1158 / Py2</strain>
    </source>
</reference>